<protein>
    <recommendedName>
        <fullName evidence="1">ATP synthase subunit b, chloroplastic</fullName>
    </recommendedName>
    <alternativeName>
        <fullName evidence="1">ATP synthase F(0) sector subunit b</fullName>
    </alternativeName>
    <alternativeName>
        <fullName evidence="1">ATPase subunit I</fullName>
    </alternativeName>
</protein>
<gene>
    <name evidence="1" type="primary">atpF</name>
</gene>
<reference key="1">
    <citation type="journal article" date="2006" name="BMC Genomics">
        <title>The complete chloroplast genome sequence of Gossypium hirsutum: organization and phylogenetic relationships to other angiosperms.</title>
        <authorList>
            <person name="Lee S.-B."/>
            <person name="Kaittanis C."/>
            <person name="Jansen R.K."/>
            <person name="Hostetler J.B."/>
            <person name="Tallon L.J."/>
            <person name="Town C.D."/>
            <person name="Daniell H."/>
        </authorList>
    </citation>
    <scope>NUCLEOTIDE SEQUENCE [LARGE SCALE GENOMIC DNA]</scope>
    <source>
        <strain>cv. Coker 310FR</strain>
    </source>
</reference>
<accession>Q2L8Z3</accession>
<geneLocation type="chloroplast"/>
<comment type="function">
    <text evidence="1">F(1)F(0) ATP synthase produces ATP from ADP in the presence of a proton or sodium gradient. F-type ATPases consist of two structural domains, F(1) containing the extramembraneous catalytic core and F(0) containing the membrane proton channel, linked together by a central stalk and a peripheral stalk. During catalysis, ATP synthesis in the catalytic domain of F(1) is coupled via a rotary mechanism of the central stalk subunits to proton translocation.</text>
</comment>
<comment type="function">
    <text evidence="1">Component of the F(0) channel, it forms part of the peripheral stalk, linking F(1) to F(0).</text>
</comment>
<comment type="subunit">
    <text evidence="1">F-type ATPases have 2 components, F(1) - the catalytic core - and F(0) - the membrane proton channel. F(1) has five subunits: alpha(3), beta(3), gamma(1), delta(1), epsilon(1). F(0) has four main subunits: a(1), b(1), b'(1) and c(10-14). The alpha and beta chains form an alternating ring which encloses part of the gamma chain. F(1) is attached to F(0) by a central stalk formed by the gamma and epsilon chains, while a peripheral stalk is formed by the delta, b and b' chains.</text>
</comment>
<comment type="subcellular location">
    <subcellularLocation>
        <location evidence="1">Plastid</location>
        <location evidence="1">Chloroplast thylakoid membrane</location>
        <topology evidence="1">Single-pass membrane protein</topology>
    </subcellularLocation>
</comment>
<comment type="miscellaneous">
    <text>In plastids the F-type ATPase is also known as CF(1)CF(0).</text>
</comment>
<comment type="similarity">
    <text evidence="1">Belongs to the ATPase B chain family.</text>
</comment>
<evidence type="ECO:0000255" key="1">
    <source>
        <dbReference type="HAMAP-Rule" id="MF_01398"/>
    </source>
</evidence>
<organism>
    <name type="scientific">Gossypium hirsutum</name>
    <name type="common">Upland cotton</name>
    <name type="synonym">Gossypium mexicanum</name>
    <dbReference type="NCBI Taxonomy" id="3635"/>
    <lineage>
        <taxon>Eukaryota</taxon>
        <taxon>Viridiplantae</taxon>
        <taxon>Streptophyta</taxon>
        <taxon>Embryophyta</taxon>
        <taxon>Tracheophyta</taxon>
        <taxon>Spermatophyta</taxon>
        <taxon>Magnoliopsida</taxon>
        <taxon>eudicotyledons</taxon>
        <taxon>Gunneridae</taxon>
        <taxon>Pentapetalae</taxon>
        <taxon>rosids</taxon>
        <taxon>malvids</taxon>
        <taxon>Malvales</taxon>
        <taxon>Malvaceae</taxon>
        <taxon>Malvoideae</taxon>
        <taxon>Gossypium</taxon>
    </lineage>
</organism>
<dbReference type="EMBL" id="DQ345959">
    <property type="protein sequence ID" value="ABC73614.1"/>
    <property type="molecule type" value="Genomic_DNA"/>
</dbReference>
<dbReference type="RefSeq" id="YP_538921.1">
    <property type="nucleotide sequence ID" value="NC_007944.1"/>
</dbReference>
<dbReference type="SMR" id="Q2L8Z3"/>
<dbReference type="GeneID" id="3989191"/>
<dbReference type="KEGG" id="ghi:3989191"/>
<dbReference type="OrthoDB" id="31882at41938"/>
<dbReference type="Proteomes" id="UP000189702">
    <property type="component" value="Chloroplast Pltd"/>
</dbReference>
<dbReference type="GO" id="GO:0009535">
    <property type="term" value="C:chloroplast thylakoid membrane"/>
    <property type="evidence" value="ECO:0007669"/>
    <property type="project" value="UniProtKB-SubCell"/>
</dbReference>
<dbReference type="GO" id="GO:0045259">
    <property type="term" value="C:proton-transporting ATP synthase complex"/>
    <property type="evidence" value="ECO:0007669"/>
    <property type="project" value="UniProtKB-KW"/>
</dbReference>
<dbReference type="GO" id="GO:0046933">
    <property type="term" value="F:proton-transporting ATP synthase activity, rotational mechanism"/>
    <property type="evidence" value="ECO:0007669"/>
    <property type="project" value="UniProtKB-UniRule"/>
</dbReference>
<dbReference type="CDD" id="cd06503">
    <property type="entry name" value="ATP-synt_Fo_b"/>
    <property type="match status" value="1"/>
</dbReference>
<dbReference type="HAMAP" id="MF_01398">
    <property type="entry name" value="ATP_synth_b_bprime"/>
    <property type="match status" value="1"/>
</dbReference>
<dbReference type="InterPro" id="IPR002146">
    <property type="entry name" value="ATP_synth_b/b'su_bac/chlpt"/>
</dbReference>
<dbReference type="PANTHER" id="PTHR34264">
    <property type="entry name" value="ATP SYNTHASE SUBUNIT B, CHLOROPLASTIC"/>
    <property type="match status" value="1"/>
</dbReference>
<dbReference type="PANTHER" id="PTHR34264:SF3">
    <property type="entry name" value="ATP SYNTHASE SUBUNIT B, CHLOROPLASTIC"/>
    <property type="match status" value="1"/>
</dbReference>
<dbReference type="Pfam" id="PF00430">
    <property type="entry name" value="ATP-synt_B"/>
    <property type="match status" value="1"/>
</dbReference>
<name>ATPF_GOSHI</name>
<feature type="chain" id="PRO_0000368936" description="ATP synthase subunit b, chloroplastic">
    <location>
        <begin position="1"/>
        <end position="184"/>
    </location>
</feature>
<feature type="transmembrane region" description="Helical" evidence="1">
    <location>
        <begin position="27"/>
        <end position="49"/>
    </location>
</feature>
<sequence length="184" mass="20870">MKNVTDSFVSLGHWPSAGSFGVNTDILATNPINLSVVLGVLIFFGKGVLSDLLDNRKERILNTIRNSEELRGGAIERLEKARARLRKVEMEADQFRVNGYSEIEREKLNLINSTYKILEQLENYKNETIYFEQQRAINQVRQRVFQQALQGALGTLNSSLNNELHLRTISANIGLFGVMKEITD</sequence>
<proteinExistence type="inferred from homology"/>
<keyword id="KW-0066">ATP synthesis</keyword>
<keyword id="KW-0138">CF(0)</keyword>
<keyword id="KW-0150">Chloroplast</keyword>
<keyword id="KW-0375">Hydrogen ion transport</keyword>
<keyword id="KW-0406">Ion transport</keyword>
<keyword id="KW-0472">Membrane</keyword>
<keyword id="KW-0934">Plastid</keyword>
<keyword id="KW-1185">Reference proteome</keyword>
<keyword id="KW-0793">Thylakoid</keyword>
<keyword id="KW-0812">Transmembrane</keyword>
<keyword id="KW-1133">Transmembrane helix</keyword>
<keyword id="KW-0813">Transport</keyword>